<dbReference type="EMBL" id="CP001158">
    <property type="protein sequence ID" value="ACL30190.1"/>
    <property type="molecule type" value="Genomic_DNA"/>
</dbReference>
<dbReference type="RefSeq" id="WP_012619531.1">
    <property type="nucleotide sequence ID" value="NC_011834.1"/>
</dbReference>
<dbReference type="SMR" id="B8D7S5"/>
<dbReference type="KEGG" id="bau:BUAPTUC7_384"/>
<dbReference type="HOGENOM" id="CLU_046483_2_1_6"/>
<dbReference type="GO" id="GO:0022627">
    <property type="term" value="C:cytosolic small ribosomal subunit"/>
    <property type="evidence" value="ECO:0007669"/>
    <property type="project" value="TreeGrafter"/>
</dbReference>
<dbReference type="GO" id="GO:0003723">
    <property type="term" value="F:RNA binding"/>
    <property type="evidence" value="ECO:0007669"/>
    <property type="project" value="TreeGrafter"/>
</dbReference>
<dbReference type="GO" id="GO:0003735">
    <property type="term" value="F:structural constituent of ribosome"/>
    <property type="evidence" value="ECO:0007669"/>
    <property type="project" value="InterPro"/>
</dbReference>
<dbReference type="GO" id="GO:0006412">
    <property type="term" value="P:translation"/>
    <property type="evidence" value="ECO:0007669"/>
    <property type="project" value="UniProtKB-UniRule"/>
</dbReference>
<dbReference type="FunFam" id="3.30.230.10:FF:000001">
    <property type="entry name" value="30S ribosomal protein S9"/>
    <property type="match status" value="1"/>
</dbReference>
<dbReference type="Gene3D" id="3.30.230.10">
    <property type="match status" value="1"/>
</dbReference>
<dbReference type="HAMAP" id="MF_00532_B">
    <property type="entry name" value="Ribosomal_uS9_B"/>
    <property type="match status" value="1"/>
</dbReference>
<dbReference type="InterPro" id="IPR020568">
    <property type="entry name" value="Ribosomal_Su5_D2-typ_SF"/>
</dbReference>
<dbReference type="InterPro" id="IPR000754">
    <property type="entry name" value="Ribosomal_uS9"/>
</dbReference>
<dbReference type="InterPro" id="IPR023035">
    <property type="entry name" value="Ribosomal_uS9_bac/plastid"/>
</dbReference>
<dbReference type="InterPro" id="IPR020574">
    <property type="entry name" value="Ribosomal_uS9_CS"/>
</dbReference>
<dbReference type="InterPro" id="IPR014721">
    <property type="entry name" value="Ribsml_uS5_D2-typ_fold_subgr"/>
</dbReference>
<dbReference type="NCBIfam" id="NF001099">
    <property type="entry name" value="PRK00132.1"/>
    <property type="match status" value="1"/>
</dbReference>
<dbReference type="PANTHER" id="PTHR21569">
    <property type="entry name" value="RIBOSOMAL PROTEIN S9"/>
    <property type="match status" value="1"/>
</dbReference>
<dbReference type="PANTHER" id="PTHR21569:SF1">
    <property type="entry name" value="SMALL RIBOSOMAL SUBUNIT PROTEIN US9M"/>
    <property type="match status" value="1"/>
</dbReference>
<dbReference type="Pfam" id="PF00380">
    <property type="entry name" value="Ribosomal_S9"/>
    <property type="match status" value="1"/>
</dbReference>
<dbReference type="SUPFAM" id="SSF54211">
    <property type="entry name" value="Ribosomal protein S5 domain 2-like"/>
    <property type="match status" value="1"/>
</dbReference>
<dbReference type="PROSITE" id="PS00360">
    <property type="entry name" value="RIBOSOMAL_S9"/>
    <property type="match status" value="1"/>
</dbReference>
<gene>
    <name evidence="1" type="primary">rpsI</name>
    <name type="ordered locus">BUAPTUC7_384</name>
</gene>
<name>RS9_BUCAT</name>
<comment type="similarity">
    <text evidence="1">Belongs to the universal ribosomal protein uS9 family.</text>
</comment>
<proteinExistence type="inferred from homology"/>
<accession>B8D7S5</accession>
<reference key="1">
    <citation type="journal article" date="2009" name="Science">
        <title>The dynamics and time scale of ongoing genomic erosion in symbiotic bacteria.</title>
        <authorList>
            <person name="Moran N.A."/>
            <person name="McLaughlin H.J."/>
            <person name="Sorek R."/>
        </authorList>
    </citation>
    <scope>NUCLEOTIDE SEQUENCE [LARGE SCALE GENOMIC DNA]</scope>
    <source>
        <strain>Tuc7</strain>
    </source>
</reference>
<sequence>MIQTQNYGTGRRKSSSARVFLRSGNGEIVVNKRSLNEYFGRETSCMIVRQPLELVDMVDKFNIYITVKGGGISGQAGAIRQGITRALIKYNQTLRFELRKAGFITRDSRQVERKKVGFRKARKRPQFSKR</sequence>
<evidence type="ECO:0000255" key="1">
    <source>
        <dbReference type="HAMAP-Rule" id="MF_00532"/>
    </source>
</evidence>
<evidence type="ECO:0000305" key="2"/>
<keyword id="KW-0687">Ribonucleoprotein</keyword>
<keyword id="KW-0689">Ribosomal protein</keyword>
<organism>
    <name type="scientific">Buchnera aphidicola subsp. Acyrthosiphon pisum (strain Tuc7)</name>
    <dbReference type="NCBI Taxonomy" id="561501"/>
    <lineage>
        <taxon>Bacteria</taxon>
        <taxon>Pseudomonadati</taxon>
        <taxon>Pseudomonadota</taxon>
        <taxon>Gammaproteobacteria</taxon>
        <taxon>Enterobacterales</taxon>
        <taxon>Erwiniaceae</taxon>
        <taxon>Buchnera</taxon>
    </lineage>
</organism>
<protein>
    <recommendedName>
        <fullName evidence="1">Small ribosomal subunit protein uS9</fullName>
    </recommendedName>
    <alternativeName>
        <fullName evidence="2">30S ribosomal protein S9</fullName>
    </alternativeName>
</protein>
<feature type="chain" id="PRO_1000146440" description="Small ribosomal subunit protein uS9">
    <location>
        <begin position="1"/>
        <end position="130"/>
    </location>
</feature>